<comment type="similarity">
    <text evidence="1">Belongs to the bacterial ribosomal protein bL33 family.</text>
</comment>
<name>RL33_SHEPC</name>
<accession>A4Y2L3</accession>
<evidence type="ECO:0000255" key="1">
    <source>
        <dbReference type="HAMAP-Rule" id="MF_00294"/>
    </source>
</evidence>
<evidence type="ECO:0000305" key="2"/>
<reference key="1">
    <citation type="submission" date="2007-04" db="EMBL/GenBank/DDBJ databases">
        <title>Complete sequence of Shewanella putrefaciens CN-32.</title>
        <authorList>
            <consortium name="US DOE Joint Genome Institute"/>
            <person name="Copeland A."/>
            <person name="Lucas S."/>
            <person name="Lapidus A."/>
            <person name="Barry K."/>
            <person name="Detter J.C."/>
            <person name="Glavina del Rio T."/>
            <person name="Hammon N."/>
            <person name="Israni S."/>
            <person name="Dalin E."/>
            <person name="Tice H."/>
            <person name="Pitluck S."/>
            <person name="Chain P."/>
            <person name="Malfatti S."/>
            <person name="Shin M."/>
            <person name="Vergez L."/>
            <person name="Schmutz J."/>
            <person name="Larimer F."/>
            <person name="Land M."/>
            <person name="Hauser L."/>
            <person name="Kyrpides N."/>
            <person name="Mikhailova N."/>
            <person name="Romine M.F."/>
            <person name="Fredrickson J."/>
            <person name="Tiedje J."/>
            <person name="Richardson P."/>
        </authorList>
    </citation>
    <scope>NUCLEOTIDE SEQUENCE [LARGE SCALE GENOMIC DNA]</scope>
    <source>
        <strain>CN-32 / ATCC BAA-453</strain>
    </source>
</reference>
<feature type="chain" id="PRO_0000356662" description="Large ribosomal subunit protein bL33">
    <location>
        <begin position="1"/>
        <end position="57"/>
    </location>
</feature>
<gene>
    <name evidence="1" type="primary">rpmG</name>
    <name type="ordered locus">Sputcn32_0464</name>
</gene>
<protein>
    <recommendedName>
        <fullName evidence="1">Large ribosomal subunit protein bL33</fullName>
    </recommendedName>
    <alternativeName>
        <fullName evidence="2">50S ribosomal protein L33</fullName>
    </alternativeName>
</protein>
<proteinExistence type="inferred from homology"/>
<dbReference type="EMBL" id="CP000681">
    <property type="protein sequence ID" value="ABP74196.1"/>
    <property type="molecule type" value="Genomic_DNA"/>
</dbReference>
<dbReference type="SMR" id="A4Y2L3"/>
<dbReference type="STRING" id="319224.Sputcn32_0464"/>
<dbReference type="KEGG" id="spc:Sputcn32_0464"/>
<dbReference type="eggNOG" id="COG0267">
    <property type="taxonomic scope" value="Bacteria"/>
</dbReference>
<dbReference type="HOGENOM" id="CLU_190949_1_1_6"/>
<dbReference type="GO" id="GO:0022625">
    <property type="term" value="C:cytosolic large ribosomal subunit"/>
    <property type="evidence" value="ECO:0007669"/>
    <property type="project" value="TreeGrafter"/>
</dbReference>
<dbReference type="GO" id="GO:0003735">
    <property type="term" value="F:structural constituent of ribosome"/>
    <property type="evidence" value="ECO:0007669"/>
    <property type="project" value="InterPro"/>
</dbReference>
<dbReference type="GO" id="GO:0006412">
    <property type="term" value="P:translation"/>
    <property type="evidence" value="ECO:0007669"/>
    <property type="project" value="UniProtKB-UniRule"/>
</dbReference>
<dbReference type="FunFam" id="2.20.28.120:FF:000001">
    <property type="entry name" value="50S ribosomal protein L33"/>
    <property type="match status" value="1"/>
</dbReference>
<dbReference type="Gene3D" id="2.20.28.120">
    <property type="entry name" value="Ribosomal protein L33"/>
    <property type="match status" value="1"/>
</dbReference>
<dbReference type="HAMAP" id="MF_00294">
    <property type="entry name" value="Ribosomal_bL33"/>
    <property type="match status" value="1"/>
</dbReference>
<dbReference type="InterPro" id="IPR001705">
    <property type="entry name" value="Ribosomal_bL33"/>
</dbReference>
<dbReference type="InterPro" id="IPR018264">
    <property type="entry name" value="Ribosomal_bL33_CS"/>
</dbReference>
<dbReference type="InterPro" id="IPR038584">
    <property type="entry name" value="Ribosomal_bL33_sf"/>
</dbReference>
<dbReference type="InterPro" id="IPR011332">
    <property type="entry name" value="Ribosomal_zn-bd"/>
</dbReference>
<dbReference type="NCBIfam" id="NF001860">
    <property type="entry name" value="PRK00595.1"/>
    <property type="match status" value="1"/>
</dbReference>
<dbReference type="NCBIfam" id="TIGR01023">
    <property type="entry name" value="rpmG_bact"/>
    <property type="match status" value="1"/>
</dbReference>
<dbReference type="PANTHER" id="PTHR15238">
    <property type="entry name" value="54S RIBOSOMAL PROTEIN L39, MITOCHONDRIAL"/>
    <property type="match status" value="1"/>
</dbReference>
<dbReference type="PANTHER" id="PTHR15238:SF1">
    <property type="entry name" value="LARGE RIBOSOMAL SUBUNIT PROTEIN BL33M"/>
    <property type="match status" value="1"/>
</dbReference>
<dbReference type="Pfam" id="PF00471">
    <property type="entry name" value="Ribosomal_L33"/>
    <property type="match status" value="1"/>
</dbReference>
<dbReference type="SUPFAM" id="SSF57829">
    <property type="entry name" value="Zn-binding ribosomal proteins"/>
    <property type="match status" value="1"/>
</dbReference>
<dbReference type="PROSITE" id="PS00582">
    <property type="entry name" value="RIBOSOMAL_L33"/>
    <property type="match status" value="1"/>
</dbReference>
<keyword id="KW-0687">Ribonucleoprotein</keyword>
<keyword id="KW-0689">Ribosomal protein</keyword>
<sequence>MAKAKGNREKIKLVSSAKTGHFYTTEKNKRNMPEKMEIKKFDPVIRQHVIYKEAKIK</sequence>
<organism>
    <name type="scientific">Shewanella putrefaciens (strain CN-32 / ATCC BAA-453)</name>
    <dbReference type="NCBI Taxonomy" id="319224"/>
    <lineage>
        <taxon>Bacteria</taxon>
        <taxon>Pseudomonadati</taxon>
        <taxon>Pseudomonadota</taxon>
        <taxon>Gammaproteobacteria</taxon>
        <taxon>Alteromonadales</taxon>
        <taxon>Shewanellaceae</taxon>
        <taxon>Shewanella</taxon>
    </lineage>
</organism>